<name>CML26_ARATH</name>
<evidence type="ECO:0000250" key="1"/>
<evidence type="ECO:0000255" key="2">
    <source>
        <dbReference type="PROSITE-ProRule" id="PRU00448"/>
    </source>
</evidence>
<evidence type="ECO:0000305" key="3"/>
<evidence type="ECO:0007744" key="4">
    <source>
    </source>
</evidence>
<dbReference type="EMBL" id="AC012679">
    <property type="protein sequence ID" value="AAG52088.1"/>
    <property type="molecule type" value="Genomic_DNA"/>
</dbReference>
<dbReference type="EMBL" id="CP002684">
    <property type="protein sequence ID" value="AEE35487.1"/>
    <property type="molecule type" value="Genomic_DNA"/>
</dbReference>
<dbReference type="EMBL" id="BT025517">
    <property type="protein sequence ID" value="ABF58935.1"/>
    <property type="molecule type" value="mRNA"/>
</dbReference>
<dbReference type="EMBL" id="AY088760">
    <property type="protein sequence ID" value="AAM67075.1"/>
    <property type="status" value="ALT_INIT"/>
    <property type="molecule type" value="mRNA"/>
</dbReference>
<dbReference type="PIR" id="C96763">
    <property type="entry name" value="C96763"/>
</dbReference>
<dbReference type="RefSeq" id="NP_177504.1">
    <property type="nucleotide sequence ID" value="NM_106021.2"/>
</dbReference>
<dbReference type="SMR" id="Q9C9U8"/>
<dbReference type="FunCoup" id="Q9C9U8">
    <property type="interactions" value="202"/>
</dbReference>
<dbReference type="STRING" id="3702.Q9C9U8"/>
<dbReference type="iPTMnet" id="Q9C9U8"/>
<dbReference type="PaxDb" id="3702-AT1G73630.1"/>
<dbReference type="ProteomicsDB" id="241000"/>
<dbReference type="EnsemblPlants" id="AT1G73630.1">
    <property type="protein sequence ID" value="AT1G73630.1"/>
    <property type="gene ID" value="AT1G73630"/>
</dbReference>
<dbReference type="GeneID" id="843697"/>
<dbReference type="Gramene" id="AT1G73630.1">
    <property type="protein sequence ID" value="AT1G73630.1"/>
    <property type="gene ID" value="AT1G73630"/>
</dbReference>
<dbReference type="KEGG" id="ath:AT1G73630"/>
<dbReference type="Araport" id="AT1G73630"/>
<dbReference type="TAIR" id="AT1G73630"/>
<dbReference type="eggNOG" id="KOG0027">
    <property type="taxonomic scope" value="Eukaryota"/>
</dbReference>
<dbReference type="HOGENOM" id="CLU_061288_20_4_1"/>
<dbReference type="InParanoid" id="Q9C9U8"/>
<dbReference type="OMA" id="ELRLIMY"/>
<dbReference type="PhylomeDB" id="Q9C9U8"/>
<dbReference type="PRO" id="PR:Q9C9U8"/>
<dbReference type="Proteomes" id="UP000006548">
    <property type="component" value="Chromosome 1"/>
</dbReference>
<dbReference type="ExpressionAtlas" id="Q9C9U8">
    <property type="expression patterns" value="baseline and differential"/>
</dbReference>
<dbReference type="GO" id="GO:0005737">
    <property type="term" value="C:cytoplasm"/>
    <property type="evidence" value="ECO:0000314"/>
    <property type="project" value="TAIR"/>
</dbReference>
<dbReference type="GO" id="GO:0005509">
    <property type="term" value="F:calcium ion binding"/>
    <property type="evidence" value="ECO:0007669"/>
    <property type="project" value="InterPro"/>
</dbReference>
<dbReference type="CDD" id="cd00051">
    <property type="entry name" value="EFh"/>
    <property type="match status" value="2"/>
</dbReference>
<dbReference type="FunFam" id="1.10.238.10:FF:000203">
    <property type="entry name" value="Probable calcium-binding protein CML27"/>
    <property type="match status" value="1"/>
</dbReference>
<dbReference type="FunFam" id="1.10.238.10:FF:000275">
    <property type="entry name" value="Probable calcium-binding protein CML27"/>
    <property type="match status" value="1"/>
</dbReference>
<dbReference type="Gene3D" id="1.10.238.10">
    <property type="entry name" value="EF-hand"/>
    <property type="match status" value="2"/>
</dbReference>
<dbReference type="InterPro" id="IPR011992">
    <property type="entry name" value="EF-hand-dom_pair"/>
</dbReference>
<dbReference type="InterPro" id="IPR018247">
    <property type="entry name" value="EF_Hand_1_Ca_BS"/>
</dbReference>
<dbReference type="InterPro" id="IPR002048">
    <property type="entry name" value="EF_hand_dom"/>
</dbReference>
<dbReference type="InterPro" id="IPR039647">
    <property type="entry name" value="EF_hand_pair_protein_CML-like"/>
</dbReference>
<dbReference type="PANTHER" id="PTHR10891">
    <property type="entry name" value="EF-HAND CALCIUM-BINDING DOMAIN CONTAINING PROTEIN"/>
    <property type="match status" value="1"/>
</dbReference>
<dbReference type="Pfam" id="PF13499">
    <property type="entry name" value="EF-hand_7"/>
    <property type="match status" value="2"/>
</dbReference>
<dbReference type="SMART" id="SM00054">
    <property type="entry name" value="EFh"/>
    <property type="match status" value="4"/>
</dbReference>
<dbReference type="SUPFAM" id="SSF47473">
    <property type="entry name" value="EF-hand"/>
    <property type="match status" value="1"/>
</dbReference>
<dbReference type="PROSITE" id="PS00018">
    <property type="entry name" value="EF_HAND_1"/>
    <property type="match status" value="4"/>
</dbReference>
<dbReference type="PROSITE" id="PS50222">
    <property type="entry name" value="EF_HAND_2"/>
    <property type="match status" value="4"/>
</dbReference>
<protein>
    <recommendedName>
        <fullName>Probable calcium-binding protein CML26</fullName>
    </recommendedName>
    <alternativeName>
        <fullName>Calmodulin-like protein 26</fullName>
    </alternativeName>
</protein>
<keyword id="KW-0007">Acetylation</keyword>
<keyword id="KW-0106">Calcium</keyword>
<keyword id="KW-0479">Metal-binding</keyword>
<keyword id="KW-1185">Reference proteome</keyword>
<keyword id="KW-0677">Repeat</keyword>
<reference key="1">
    <citation type="journal article" date="2000" name="Nature">
        <title>Sequence and analysis of chromosome 1 of the plant Arabidopsis thaliana.</title>
        <authorList>
            <person name="Theologis A."/>
            <person name="Ecker J.R."/>
            <person name="Palm C.J."/>
            <person name="Federspiel N.A."/>
            <person name="Kaul S."/>
            <person name="White O."/>
            <person name="Alonso J."/>
            <person name="Altafi H."/>
            <person name="Araujo R."/>
            <person name="Bowman C.L."/>
            <person name="Brooks S.Y."/>
            <person name="Buehler E."/>
            <person name="Chan A."/>
            <person name="Chao Q."/>
            <person name="Chen H."/>
            <person name="Cheuk R.F."/>
            <person name="Chin C.W."/>
            <person name="Chung M.K."/>
            <person name="Conn L."/>
            <person name="Conway A.B."/>
            <person name="Conway A.R."/>
            <person name="Creasy T.H."/>
            <person name="Dewar K."/>
            <person name="Dunn P."/>
            <person name="Etgu P."/>
            <person name="Feldblyum T.V."/>
            <person name="Feng J.-D."/>
            <person name="Fong B."/>
            <person name="Fujii C.Y."/>
            <person name="Gill J.E."/>
            <person name="Goldsmith A.D."/>
            <person name="Haas B."/>
            <person name="Hansen N.F."/>
            <person name="Hughes B."/>
            <person name="Huizar L."/>
            <person name="Hunter J.L."/>
            <person name="Jenkins J."/>
            <person name="Johnson-Hopson C."/>
            <person name="Khan S."/>
            <person name="Khaykin E."/>
            <person name="Kim C.J."/>
            <person name="Koo H.L."/>
            <person name="Kremenetskaia I."/>
            <person name="Kurtz D.B."/>
            <person name="Kwan A."/>
            <person name="Lam B."/>
            <person name="Langin-Hooper S."/>
            <person name="Lee A."/>
            <person name="Lee J.M."/>
            <person name="Lenz C.A."/>
            <person name="Li J.H."/>
            <person name="Li Y.-P."/>
            <person name="Lin X."/>
            <person name="Liu S.X."/>
            <person name="Liu Z.A."/>
            <person name="Luros J.S."/>
            <person name="Maiti R."/>
            <person name="Marziali A."/>
            <person name="Militscher J."/>
            <person name="Miranda M."/>
            <person name="Nguyen M."/>
            <person name="Nierman W.C."/>
            <person name="Osborne B.I."/>
            <person name="Pai G."/>
            <person name="Peterson J."/>
            <person name="Pham P.K."/>
            <person name="Rizzo M."/>
            <person name="Rooney T."/>
            <person name="Rowley D."/>
            <person name="Sakano H."/>
            <person name="Salzberg S.L."/>
            <person name="Schwartz J.R."/>
            <person name="Shinn P."/>
            <person name="Southwick A.M."/>
            <person name="Sun H."/>
            <person name="Tallon L.J."/>
            <person name="Tambunga G."/>
            <person name="Toriumi M.J."/>
            <person name="Town C.D."/>
            <person name="Utterback T."/>
            <person name="Van Aken S."/>
            <person name="Vaysberg M."/>
            <person name="Vysotskaia V.S."/>
            <person name="Walker M."/>
            <person name="Wu D."/>
            <person name="Yu G."/>
            <person name="Fraser C.M."/>
            <person name="Venter J.C."/>
            <person name="Davis R.W."/>
        </authorList>
    </citation>
    <scope>NUCLEOTIDE SEQUENCE [LARGE SCALE GENOMIC DNA]</scope>
    <source>
        <strain>cv. Columbia</strain>
    </source>
</reference>
<reference key="2">
    <citation type="journal article" date="2017" name="Plant J.">
        <title>Araport11: a complete reannotation of the Arabidopsis thaliana reference genome.</title>
        <authorList>
            <person name="Cheng C.Y."/>
            <person name="Krishnakumar V."/>
            <person name="Chan A.P."/>
            <person name="Thibaud-Nissen F."/>
            <person name="Schobel S."/>
            <person name="Town C.D."/>
        </authorList>
    </citation>
    <scope>GENOME REANNOTATION</scope>
    <source>
        <strain>cv. Columbia</strain>
    </source>
</reference>
<reference key="3">
    <citation type="submission" date="2006-05" db="EMBL/GenBank/DDBJ databases">
        <title>Arabidopsis ORF clones.</title>
        <authorList>
            <person name="Kim C.J."/>
            <person name="Chen H."/>
            <person name="Quinitio C."/>
            <person name="Shinn P."/>
            <person name="Ecker J.R."/>
        </authorList>
    </citation>
    <scope>NUCLEOTIDE SEQUENCE [LARGE SCALE MRNA]</scope>
    <source>
        <strain>cv. Columbia</strain>
    </source>
</reference>
<reference key="4">
    <citation type="submission" date="2002-03" db="EMBL/GenBank/DDBJ databases">
        <title>Full-length cDNA from Arabidopsis thaliana.</title>
        <authorList>
            <person name="Brover V.V."/>
            <person name="Troukhan M.E."/>
            <person name="Alexandrov N.A."/>
            <person name="Lu Y.-P."/>
            <person name="Flavell R.B."/>
            <person name="Feldmann K.A."/>
        </authorList>
    </citation>
    <scope>NUCLEOTIDE SEQUENCE [LARGE SCALE MRNA]</scope>
</reference>
<reference key="5">
    <citation type="journal article" date="2003" name="New Phytol.">
        <title>Calmodulins and related potential calcium sensors of Arabidopsis.</title>
        <authorList>
            <person name="McCormack E."/>
            <person name="Braam J."/>
        </authorList>
    </citation>
    <scope>GENE FAMILY</scope>
    <scope>NOMENCLATURE</scope>
</reference>
<reference key="6">
    <citation type="journal article" date="2009" name="Plant Physiol.">
        <title>Large-scale Arabidopsis phosphoproteome profiling reveals novel chloroplast kinase substrates and phosphorylation networks.</title>
        <authorList>
            <person name="Reiland S."/>
            <person name="Messerli G."/>
            <person name="Baerenfaller K."/>
            <person name="Gerrits B."/>
            <person name="Endler A."/>
            <person name="Grossmann J."/>
            <person name="Gruissem W."/>
            <person name="Baginsky S."/>
        </authorList>
    </citation>
    <scope>IDENTIFICATION BY MASS SPECTROMETRY [LARGE SCALE ANALYSIS]</scope>
</reference>
<reference key="7">
    <citation type="journal article" date="2012" name="Mol. Cell. Proteomics">
        <title>Comparative large-scale characterisation of plant vs. mammal proteins reveals similar and idiosyncratic N-alpha acetylation features.</title>
        <authorList>
            <person name="Bienvenut W.V."/>
            <person name="Sumpton D."/>
            <person name="Martinez A."/>
            <person name="Lilla S."/>
            <person name="Espagne C."/>
            <person name="Meinnel T."/>
            <person name="Giglione C."/>
        </authorList>
    </citation>
    <scope>ACETYLATION [LARGE SCALE ANALYSIS] AT ALA-2</scope>
    <scope>CLEAVAGE OF INITIATOR METHIONINE [LARGE SCALE ANALYSIS]</scope>
    <scope>IDENTIFICATION BY MASS SPECTROMETRY [LARGE SCALE ANALYSIS]</scope>
</reference>
<sequence>MANTNLESTNKSTTPSTDMELKKVFDKFDANGDGKISVSELGNVFKSMGTSYTEEELNRVLDEIDIDCDGFINQEEFATICRSSSSAVEIREAFDLYDQNKNGLISSSEIHKVLNRLGMTCSVEDCVRMIGHVDTDGDGNVNFEEFQKMMSSPELVKGTVANS</sequence>
<comment type="function">
    <text evidence="1">Potential calcium sensor.</text>
</comment>
<comment type="caution">
    <text evidence="3">Although assigned as a calmodulin family member by Ref.5, it only contains EF-hand domains.</text>
</comment>
<comment type="sequence caution" evidence="3">
    <conflict type="erroneous initiation">
        <sequence resource="EMBL-CDS" id="AAM67075"/>
    </conflict>
</comment>
<accession>Q9C9U8</accession>
<accession>Q8L8W9</accession>
<proteinExistence type="evidence at protein level"/>
<feature type="initiator methionine" description="Removed" evidence="4">
    <location>
        <position position="1"/>
    </location>
</feature>
<feature type="chain" id="PRO_0000342954" description="Probable calcium-binding protein CML26">
    <location>
        <begin position="2"/>
        <end position="163"/>
    </location>
</feature>
<feature type="domain" description="EF-hand 1" evidence="2">
    <location>
        <begin position="16"/>
        <end position="51"/>
    </location>
</feature>
<feature type="domain" description="EF-hand 2" evidence="2">
    <location>
        <begin position="52"/>
        <end position="82"/>
    </location>
</feature>
<feature type="domain" description="EF-hand 3" evidence="2">
    <location>
        <begin position="85"/>
        <end position="120"/>
    </location>
</feature>
<feature type="domain" description="EF-hand 4" evidence="2">
    <location>
        <begin position="121"/>
        <end position="156"/>
    </location>
</feature>
<feature type="binding site" evidence="2">
    <location>
        <position position="29"/>
    </location>
    <ligand>
        <name>Ca(2+)</name>
        <dbReference type="ChEBI" id="CHEBI:29108"/>
        <label>1</label>
    </ligand>
</feature>
<feature type="binding site" evidence="2">
    <location>
        <position position="31"/>
    </location>
    <ligand>
        <name>Ca(2+)</name>
        <dbReference type="ChEBI" id="CHEBI:29108"/>
        <label>1</label>
    </ligand>
</feature>
<feature type="binding site" evidence="2">
    <location>
        <position position="33"/>
    </location>
    <ligand>
        <name>Ca(2+)</name>
        <dbReference type="ChEBI" id="CHEBI:29108"/>
        <label>1</label>
    </ligand>
</feature>
<feature type="binding site" evidence="2">
    <location>
        <position position="35"/>
    </location>
    <ligand>
        <name>Ca(2+)</name>
        <dbReference type="ChEBI" id="CHEBI:29108"/>
        <label>1</label>
    </ligand>
</feature>
<feature type="binding site" evidence="2">
    <location>
        <position position="40"/>
    </location>
    <ligand>
        <name>Ca(2+)</name>
        <dbReference type="ChEBI" id="CHEBI:29108"/>
        <label>1</label>
    </ligand>
</feature>
<feature type="binding site" evidence="2">
    <location>
        <position position="65"/>
    </location>
    <ligand>
        <name>Ca(2+)</name>
        <dbReference type="ChEBI" id="CHEBI:29108"/>
        <label>2</label>
    </ligand>
</feature>
<feature type="binding site" evidence="2">
    <location>
        <position position="67"/>
    </location>
    <ligand>
        <name>Ca(2+)</name>
        <dbReference type="ChEBI" id="CHEBI:29108"/>
        <label>2</label>
    </ligand>
</feature>
<feature type="binding site" evidence="2">
    <location>
        <position position="69"/>
    </location>
    <ligand>
        <name>Ca(2+)</name>
        <dbReference type="ChEBI" id="CHEBI:29108"/>
        <label>2</label>
    </ligand>
</feature>
<feature type="binding site" evidence="2">
    <location>
        <position position="76"/>
    </location>
    <ligand>
        <name>Ca(2+)</name>
        <dbReference type="ChEBI" id="CHEBI:29108"/>
        <label>2</label>
    </ligand>
</feature>
<feature type="binding site" evidence="2">
    <location>
        <position position="98"/>
    </location>
    <ligand>
        <name>Ca(2+)</name>
        <dbReference type="ChEBI" id="CHEBI:29108"/>
        <label>3</label>
    </ligand>
</feature>
<feature type="binding site" evidence="2">
    <location>
        <position position="100"/>
    </location>
    <ligand>
        <name>Ca(2+)</name>
        <dbReference type="ChEBI" id="CHEBI:29108"/>
        <label>3</label>
    </ligand>
</feature>
<feature type="binding site" evidence="2">
    <location>
        <position position="102"/>
    </location>
    <ligand>
        <name>Ca(2+)</name>
        <dbReference type="ChEBI" id="CHEBI:29108"/>
        <label>3</label>
    </ligand>
</feature>
<feature type="binding site" evidence="2">
    <location>
        <position position="109"/>
    </location>
    <ligand>
        <name>Ca(2+)</name>
        <dbReference type="ChEBI" id="CHEBI:29108"/>
        <label>3</label>
    </ligand>
</feature>
<feature type="binding site" evidence="2">
    <location>
        <position position="134"/>
    </location>
    <ligand>
        <name>Ca(2+)</name>
        <dbReference type="ChEBI" id="CHEBI:29108"/>
        <label>4</label>
    </ligand>
</feature>
<feature type="binding site" evidence="2">
    <location>
        <position position="136"/>
    </location>
    <ligand>
        <name>Ca(2+)</name>
        <dbReference type="ChEBI" id="CHEBI:29108"/>
        <label>4</label>
    </ligand>
</feature>
<feature type="binding site" evidence="2">
    <location>
        <position position="138"/>
    </location>
    <ligand>
        <name>Ca(2+)</name>
        <dbReference type="ChEBI" id="CHEBI:29108"/>
        <label>4</label>
    </ligand>
</feature>
<feature type="binding site" evidence="2">
    <location>
        <position position="140"/>
    </location>
    <ligand>
        <name>Ca(2+)</name>
        <dbReference type="ChEBI" id="CHEBI:29108"/>
        <label>4</label>
    </ligand>
</feature>
<feature type="binding site" evidence="2">
    <location>
        <position position="145"/>
    </location>
    <ligand>
        <name>Ca(2+)</name>
        <dbReference type="ChEBI" id="CHEBI:29108"/>
        <label>4</label>
    </ligand>
</feature>
<feature type="modified residue" description="N-acetylalanine" evidence="4">
    <location>
        <position position="2"/>
    </location>
</feature>
<feature type="sequence conflict" description="In Ref. 4; AAM67075." evidence="3" ref="4">
    <original>L</original>
    <variation>P</variation>
    <location>
        <position position="6"/>
    </location>
</feature>
<feature type="sequence conflict" description="In Ref. 4; AAM67075." evidence="3" ref="4">
    <original>G</original>
    <variation>D</variation>
    <location>
        <position position="32"/>
    </location>
</feature>
<gene>
    <name type="primary">CML26</name>
    <name type="ordered locus">At1g73630</name>
    <name type="ORF">F25P22.4</name>
</gene>
<organism>
    <name type="scientific">Arabidopsis thaliana</name>
    <name type="common">Mouse-ear cress</name>
    <dbReference type="NCBI Taxonomy" id="3702"/>
    <lineage>
        <taxon>Eukaryota</taxon>
        <taxon>Viridiplantae</taxon>
        <taxon>Streptophyta</taxon>
        <taxon>Embryophyta</taxon>
        <taxon>Tracheophyta</taxon>
        <taxon>Spermatophyta</taxon>
        <taxon>Magnoliopsida</taxon>
        <taxon>eudicotyledons</taxon>
        <taxon>Gunneridae</taxon>
        <taxon>Pentapetalae</taxon>
        <taxon>rosids</taxon>
        <taxon>malvids</taxon>
        <taxon>Brassicales</taxon>
        <taxon>Brassicaceae</taxon>
        <taxon>Camelineae</taxon>
        <taxon>Arabidopsis</taxon>
    </lineage>
</organism>